<feature type="chain" id="PRO_0000239146" description="DEAD-box ATP-dependent RNA helicase 5">
    <location>
        <begin position="1"/>
        <end position="537"/>
    </location>
</feature>
<feature type="domain" description="Helicase ATP-binding" evidence="3">
    <location>
        <begin position="145"/>
        <end position="324"/>
    </location>
</feature>
<feature type="domain" description="Helicase C-terminal" evidence="4">
    <location>
        <begin position="349"/>
        <end position="500"/>
    </location>
</feature>
<feature type="region of interest" description="Disordered" evidence="5">
    <location>
        <begin position="1"/>
        <end position="97"/>
    </location>
</feature>
<feature type="coiled-coil region" evidence="2">
    <location>
        <begin position="22"/>
        <end position="80"/>
    </location>
</feature>
<feature type="short sequence motif" description="Q motif">
    <location>
        <begin position="116"/>
        <end position="142"/>
    </location>
</feature>
<feature type="short sequence motif" description="DEAD box">
    <location>
        <begin position="272"/>
        <end position="275"/>
    </location>
</feature>
<feature type="compositionally biased region" description="Basic residues" evidence="5">
    <location>
        <begin position="23"/>
        <end position="33"/>
    </location>
</feature>
<feature type="compositionally biased region" description="Basic and acidic residues" evidence="5">
    <location>
        <begin position="68"/>
        <end position="87"/>
    </location>
</feature>
<feature type="binding site" evidence="3">
    <location>
        <begin position="158"/>
        <end position="165"/>
    </location>
    <ligand>
        <name>ATP</name>
        <dbReference type="ChEBI" id="CHEBI:30616"/>
    </ligand>
</feature>
<feature type="modified residue" description="Phosphoserine" evidence="7">
    <location>
        <position position="533"/>
    </location>
</feature>
<feature type="sequence conflict" description="In Ref. 4; CAA09197." evidence="6" ref="4">
    <original>D</original>
    <variation>N</variation>
    <location>
        <position position="537"/>
    </location>
</feature>
<evidence type="ECO:0000250" key="1"/>
<evidence type="ECO:0000255" key="2"/>
<evidence type="ECO:0000255" key="3">
    <source>
        <dbReference type="PROSITE-ProRule" id="PRU00541"/>
    </source>
</evidence>
<evidence type="ECO:0000255" key="4">
    <source>
        <dbReference type="PROSITE-ProRule" id="PRU00542"/>
    </source>
</evidence>
<evidence type="ECO:0000256" key="5">
    <source>
        <dbReference type="SAM" id="MobiDB-lite"/>
    </source>
</evidence>
<evidence type="ECO:0000305" key="6"/>
<evidence type="ECO:0007744" key="7">
    <source>
    </source>
</evidence>
<dbReference type="EC" id="3.6.4.13"/>
<dbReference type="EMBL" id="AC074309">
    <property type="protein sequence ID" value="AAG50784.1"/>
    <property type="molecule type" value="Genomic_DNA"/>
</dbReference>
<dbReference type="EMBL" id="AC079041">
    <property type="protein sequence ID" value="AAG50723.1"/>
    <property type="molecule type" value="Genomic_DNA"/>
</dbReference>
<dbReference type="EMBL" id="CP002684">
    <property type="protein sequence ID" value="AEE31423.1"/>
    <property type="molecule type" value="Genomic_DNA"/>
</dbReference>
<dbReference type="EMBL" id="AY080680">
    <property type="protein sequence ID" value="AAL86356.1"/>
    <property type="molecule type" value="mRNA"/>
</dbReference>
<dbReference type="EMBL" id="AY117298">
    <property type="protein sequence ID" value="AAM51373.1"/>
    <property type="molecule type" value="mRNA"/>
</dbReference>
<dbReference type="EMBL" id="AJ010458">
    <property type="protein sequence ID" value="CAA09197.1"/>
    <property type="molecule type" value="mRNA"/>
</dbReference>
<dbReference type="PIR" id="A86444">
    <property type="entry name" value="A86444"/>
</dbReference>
<dbReference type="PIR" id="T51739">
    <property type="entry name" value="T51739"/>
</dbReference>
<dbReference type="RefSeq" id="NP_174479.1">
    <property type="nucleotide sequence ID" value="NM_102933.3"/>
</dbReference>
<dbReference type="SMR" id="Q9C551"/>
<dbReference type="BioGRID" id="25321">
    <property type="interactions" value="13"/>
</dbReference>
<dbReference type="FunCoup" id="Q9C551">
    <property type="interactions" value="1683"/>
</dbReference>
<dbReference type="IntAct" id="Q9C551">
    <property type="interactions" value="3"/>
</dbReference>
<dbReference type="STRING" id="3702.Q9C551"/>
<dbReference type="iPTMnet" id="Q9C551"/>
<dbReference type="PaxDb" id="3702-AT1G31970.1"/>
<dbReference type="ProteomicsDB" id="236181"/>
<dbReference type="EnsemblPlants" id="AT1G31970.1">
    <property type="protein sequence ID" value="AT1G31970.1"/>
    <property type="gene ID" value="AT1G31970"/>
</dbReference>
<dbReference type="GeneID" id="840087"/>
<dbReference type="Gramene" id="AT1G31970.1">
    <property type="protein sequence ID" value="AT1G31970.1"/>
    <property type="gene ID" value="AT1G31970"/>
</dbReference>
<dbReference type="KEGG" id="ath:AT1G31970"/>
<dbReference type="Araport" id="AT1G31970"/>
<dbReference type="TAIR" id="AT1G31970">
    <property type="gene designation" value="STRS1"/>
</dbReference>
<dbReference type="eggNOG" id="KOG0331">
    <property type="taxonomic scope" value="Eukaryota"/>
</dbReference>
<dbReference type="HOGENOM" id="CLU_003041_1_5_1"/>
<dbReference type="InParanoid" id="Q9C551"/>
<dbReference type="OMA" id="KKTHDMY"/>
<dbReference type="OrthoDB" id="196131at2759"/>
<dbReference type="PhylomeDB" id="Q9C551"/>
<dbReference type="CD-CODE" id="4299E36E">
    <property type="entry name" value="Nucleolus"/>
</dbReference>
<dbReference type="PRO" id="PR:Q9C551"/>
<dbReference type="Proteomes" id="UP000006548">
    <property type="component" value="Chromosome 1"/>
</dbReference>
<dbReference type="ExpressionAtlas" id="Q9C551">
    <property type="expression patterns" value="baseline and differential"/>
</dbReference>
<dbReference type="GO" id="GO:0005730">
    <property type="term" value="C:nucleolus"/>
    <property type="evidence" value="ECO:0007669"/>
    <property type="project" value="UniProtKB-SubCell"/>
</dbReference>
<dbReference type="GO" id="GO:0005524">
    <property type="term" value="F:ATP binding"/>
    <property type="evidence" value="ECO:0007669"/>
    <property type="project" value="UniProtKB-KW"/>
</dbReference>
<dbReference type="GO" id="GO:0016887">
    <property type="term" value="F:ATP hydrolysis activity"/>
    <property type="evidence" value="ECO:0007669"/>
    <property type="project" value="RHEA"/>
</dbReference>
<dbReference type="GO" id="GO:0003723">
    <property type="term" value="F:RNA binding"/>
    <property type="evidence" value="ECO:0007669"/>
    <property type="project" value="UniProtKB-KW"/>
</dbReference>
<dbReference type="GO" id="GO:0003724">
    <property type="term" value="F:RNA helicase activity"/>
    <property type="evidence" value="ECO:0007669"/>
    <property type="project" value="UniProtKB-EC"/>
</dbReference>
<dbReference type="GO" id="GO:0006364">
    <property type="term" value="P:rRNA processing"/>
    <property type="evidence" value="ECO:0007669"/>
    <property type="project" value="UniProtKB-KW"/>
</dbReference>
<dbReference type="CDD" id="cd00268">
    <property type="entry name" value="DEADc"/>
    <property type="match status" value="1"/>
</dbReference>
<dbReference type="CDD" id="cd18787">
    <property type="entry name" value="SF2_C_DEAD"/>
    <property type="match status" value="1"/>
</dbReference>
<dbReference type="FunFam" id="3.40.50.300:FF:000008">
    <property type="entry name" value="ATP-dependent RNA helicase RhlB"/>
    <property type="match status" value="1"/>
</dbReference>
<dbReference type="FunFam" id="3.40.50.300:FF:004534">
    <property type="entry name" value="DEAD-box ATP-dependent RNA helicase 5"/>
    <property type="match status" value="1"/>
</dbReference>
<dbReference type="Gene3D" id="3.40.50.300">
    <property type="entry name" value="P-loop containing nucleotide triphosphate hydrolases"/>
    <property type="match status" value="2"/>
</dbReference>
<dbReference type="InterPro" id="IPR011545">
    <property type="entry name" value="DEAD/DEAH_box_helicase_dom"/>
</dbReference>
<dbReference type="InterPro" id="IPR014001">
    <property type="entry name" value="Helicase_ATP-bd"/>
</dbReference>
<dbReference type="InterPro" id="IPR001650">
    <property type="entry name" value="Helicase_C-like"/>
</dbReference>
<dbReference type="InterPro" id="IPR027417">
    <property type="entry name" value="P-loop_NTPase"/>
</dbReference>
<dbReference type="InterPro" id="IPR000629">
    <property type="entry name" value="RNA-helicase_DEAD-box_CS"/>
</dbReference>
<dbReference type="InterPro" id="IPR014014">
    <property type="entry name" value="RNA_helicase_DEAD_Q_motif"/>
</dbReference>
<dbReference type="PANTHER" id="PTHR47958">
    <property type="entry name" value="ATP-DEPENDENT RNA HELICASE DBP3"/>
    <property type="match status" value="1"/>
</dbReference>
<dbReference type="Pfam" id="PF00270">
    <property type="entry name" value="DEAD"/>
    <property type="match status" value="1"/>
</dbReference>
<dbReference type="Pfam" id="PF00271">
    <property type="entry name" value="Helicase_C"/>
    <property type="match status" value="1"/>
</dbReference>
<dbReference type="SMART" id="SM00487">
    <property type="entry name" value="DEXDc"/>
    <property type="match status" value="1"/>
</dbReference>
<dbReference type="SMART" id="SM00490">
    <property type="entry name" value="HELICc"/>
    <property type="match status" value="1"/>
</dbReference>
<dbReference type="SUPFAM" id="SSF52540">
    <property type="entry name" value="P-loop containing nucleoside triphosphate hydrolases"/>
    <property type="match status" value="1"/>
</dbReference>
<dbReference type="PROSITE" id="PS00039">
    <property type="entry name" value="DEAD_ATP_HELICASE"/>
    <property type="match status" value="1"/>
</dbReference>
<dbReference type="PROSITE" id="PS51192">
    <property type="entry name" value="HELICASE_ATP_BIND_1"/>
    <property type="match status" value="1"/>
</dbReference>
<dbReference type="PROSITE" id="PS51194">
    <property type="entry name" value="HELICASE_CTER"/>
    <property type="match status" value="1"/>
</dbReference>
<dbReference type="PROSITE" id="PS51195">
    <property type="entry name" value="Q_MOTIF"/>
    <property type="match status" value="1"/>
</dbReference>
<gene>
    <name type="primary">RH5</name>
    <name type="ordered locus">At1g31970</name>
    <name type="ORF">F5M6.3</name>
    <name type="ORF">T12O21.12</name>
</gene>
<keyword id="KW-0067">ATP-binding</keyword>
<keyword id="KW-0175">Coiled coil</keyword>
<keyword id="KW-0347">Helicase</keyword>
<keyword id="KW-0378">Hydrolase</keyword>
<keyword id="KW-0547">Nucleotide-binding</keyword>
<keyword id="KW-0539">Nucleus</keyword>
<keyword id="KW-0597">Phosphoprotein</keyword>
<keyword id="KW-1185">Reference proteome</keyword>
<keyword id="KW-0690">Ribosome biogenesis</keyword>
<keyword id="KW-0694">RNA-binding</keyword>
<keyword id="KW-0698">rRNA processing</keyword>
<reference key="1">
    <citation type="journal article" date="2000" name="Nature">
        <title>Sequence and analysis of chromosome 1 of the plant Arabidopsis thaliana.</title>
        <authorList>
            <person name="Theologis A."/>
            <person name="Ecker J.R."/>
            <person name="Palm C.J."/>
            <person name="Federspiel N.A."/>
            <person name="Kaul S."/>
            <person name="White O."/>
            <person name="Alonso J."/>
            <person name="Altafi H."/>
            <person name="Araujo R."/>
            <person name="Bowman C.L."/>
            <person name="Brooks S.Y."/>
            <person name="Buehler E."/>
            <person name="Chan A."/>
            <person name="Chao Q."/>
            <person name="Chen H."/>
            <person name="Cheuk R.F."/>
            <person name="Chin C.W."/>
            <person name="Chung M.K."/>
            <person name="Conn L."/>
            <person name="Conway A.B."/>
            <person name="Conway A.R."/>
            <person name="Creasy T.H."/>
            <person name="Dewar K."/>
            <person name="Dunn P."/>
            <person name="Etgu P."/>
            <person name="Feldblyum T.V."/>
            <person name="Feng J.-D."/>
            <person name="Fong B."/>
            <person name="Fujii C.Y."/>
            <person name="Gill J.E."/>
            <person name="Goldsmith A.D."/>
            <person name="Haas B."/>
            <person name="Hansen N.F."/>
            <person name="Hughes B."/>
            <person name="Huizar L."/>
            <person name="Hunter J.L."/>
            <person name="Jenkins J."/>
            <person name="Johnson-Hopson C."/>
            <person name="Khan S."/>
            <person name="Khaykin E."/>
            <person name="Kim C.J."/>
            <person name="Koo H.L."/>
            <person name="Kremenetskaia I."/>
            <person name="Kurtz D.B."/>
            <person name="Kwan A."/>
            <person name="Lam B."/>
            <person name="Langin-Hooper S."/>
            <person name="Lee A."/>
            <person name="Lee J.M."/>
            <person name="Lenz C.A."/>
            <person name="Li J.H."/>
            <person name="Li Y.-P."/>
            <person name="Lin X."/>
            <person name="Liu S.X."/>
            <person name="Liu Z.A."/>
            <person name="Luros J.S."/>
            <person name="Maiti R."/>
            <person name="Marziali A."/>
            <person name="Militscher J."/>
            <person name="Miranda M."/>
            <person name="Nguyen M."/>
            <person name="Nierman W.C."/>
            <person name="Osborne B.I."/>
            <person name="Pai G."/>
            <person name="Peterson J."/>
            <person name="Pham P.K."/>
            <person name="Rizzo M."/>
            <person name="Rooney T."/>
            <person name="Rowley D."/>
            <person name="Sakano H."/>
            <person name="Salzberg S.L."/>
            <person name="Schwartz J.R."/>
            <person name="Shinn P."/>
            <person name="Southwick A.M."/>
            <person name="Sun H."/>
            <person name="Tallon L.J."/>
            <person name="Tambunga G."/>
            <person name="Toriumi M.J."/>
            <person name="Town C.D."/>
            <person name="Utterback T."/>
            <person name="Van Aken S."/>
            <person name="Vaysberg M."/>
            <person name="Vysotskaia V.S."/>
            <person name="Walker M."/>
            <person name="Wu D."/>
            <person name="Yu G."/>
            <person name="Fraser C.M."/>
            <person name="Venter J.C."/>
            <person name="Davis R.W."/>
        </authorList>
    </citation>
    <scope>NUCLEOTIDE SEQUENCE [LARGE SCALE GENOMIC DNA]</scope>
    <source>
        <strain>cv. Columbia</strain>
    </source>
</reference>
<reference key="2">
    <citation type="journal article" date="2017" name="Plant J.">
        <title>Araport11: a complete reannotation of the Arabidopsis thaliana reference genome.</title>
        <authorList>
            <person name="Cheng C.Y."/>
            <person name="Krishnakumar V."/>
            <person name="Chan A.P."/>
            <person name="Thibaud-Nissen F."/>
            <person name="Schobel S."/>
            <person name="Town C.D."/>
        </authorList>
    </citation>
    <scope>GENOME REANNOTATION</scope>
    <source>
        <strain>cv. Columbia</strain>
    </source>
</reference>
<reference key="3">
    <citation type="journal article" date="2003" name="Science">
        <title>Empirical analysis of transcriptional activity in the Arabidopsis genome.</title>
        <authorList>
            <person name="Yamada K."/>
            <person name="Lim J."/>
            <person name="Dale J.M."/>
            <person name="Chen H."/>
            <person name="Shinn P."/>
            <person name="Palm C.J."/>
            <person name="Southwick A.M."/>
            <person name="Wu H.C."/>
            <person name="Kim C.J."/>
            <person name="Nguyen M."/>
            <person name="Pham P.K."/>
            <person name="Cheuk R.F."/>
            <person name="Karlin-Newmann G."/>
            <person name="Liu S.X."/>
            <person name="Lam B."/>
            <person name="Sakano H."/>
            <person name="Wu T."/>
            <person name="Yu G."/>
            <person name="Miranda M."/>
            <person name="Quach H.L."/>
            <person name="Tripp M."/>
            <person name="Chang C.H."/>
            <person name="Lee J.M."/>
            <person name="Toriumi M.J."/>
            <person name="Chan M.M."/>
            <person name="Tang C.C."/>
            <person name="Onodera C.S."/>
            <person name="Deng J.M."/>
            <person name="Akiyama K."/>
            <person name="Ansari Y."/>
            <person name="Arakawa T."/>
            <person name="Banh J."/>
            <person name="Banno F."/>
            <person name="Bowser L."/>
            <person name="Brooks S.Y."/>
            <person name="Carninci P."/>
            <person name="Chao Q."/>
            <person name="Choy N."/>
            <person name="Enju A."/>
            <person name="Goldsmith A.D."/>
            <person name="Gurjal M."/>
            <person name="Hansen N.F."/>
            <person name="Hayashizaki Y."/>
            <person name="Johnson-Hopson C."/>
            <person name="Hsuan V.W."/>
            <person name="Iida K."/>
            <person name="Karnes M."/>
            <person name="Khan S."/>
            <person name="Koesema E."/>
            <person name="Ishida J."/>
            <person name="Jiang P.X."/>
            <person name="Jones T."/>
            <person name="Kawai J."/>
            <person name="Kamiya A."/>
            <person name="Meyers C."/>
            <person name="Nakajima M."/>
            <person name="Narusaka M."/>
            <person name="Seki M."/>
            <person name="Sakurai T."/>
            <person name="Satou M."/>
            <person name="Tamse R."/>
            <person name="Vaysberg M."/>
            <person name="Wallender E.K."/>
            <person name="Wong C."/>
            <person name="Yamamura Y."/>
            <person name="Yuan S."/>
            <person name="Shinozaki K."/>
            <person name="Davis R.W."/>
            <person name="Theologis A."/>
            <person name="Ecker J.R."/>
        </authorList>
    </citation>
    <scope>NUCLEOTIDE SEQUENCE [LARGE SCALE MRNA]</scope>
    <source>
        <strain>cv. Columbia</strain>
    </source>
</reference>
<reference key="4">
    <citation type="journal article" date="1999" name="Nucleic Acids Res.">
        <title>The DEAD box RNA helicase family in Arabidopsis thaliana.</title>
        <authorList>
            <person name="Aubourg S."/>
            <person name="Kreis M."/>
            <person name="Lecharny A."/>
        </authorList>
    </citation>
    <scope>NUCLEOTIDE SEQUENCE [MRNA] OF 127-537</scope>
    <source>
        <strain>cv. Columbia</strain>
    </source>
</reference>
<reference key="5">
    <citation type="journal article" date="2004" name="Plant Biotechnol. J.">
        <title>DEAD-box RNA helicases in Arabidopsis thaliana: establishing a link between quantitative expression, gene structure and evolution of a family of genes.</title>
        <authorList>
            <person name="Mingam A."/>
            <person name="Toffano-Nioche C."/>
            <person name="Brunaud V."/>
            <person name="Boudet N."/>
            <person name="Kreis M."/>
            <person name="Lecharny A."/>
        </authorList>
    </citation>
    <scope>GENE FAMILY</scope>
    <scope>NOMENCLATURE</scope>
</reference>
<reference key="6">
    <citation type="journal article" date="2009" name="Plant Physiol.">
        <title>Large-scale Arabidopsis phosphoproteome profiling reveals novel chloroplast kinase substrates and phosphorylation networks.</title>
        <authorList>
            <person name="Reiland S."/>
            <person name="Messerli G."/>
            <person name="Baerenfaller K."/>
            <person name="Gerrits B."/>
            <person name="Endler A."/>
            <person name="Grossmann J."/>
            <person name="Gruissem W."/>
            <person name="Baginsky S."/>
        </authorList>
    </citation>
    <scope>PHOSPHORYLATION [LARGE SCALE ANALYSIS] AT SER-533</scope>
    <scope>IDENTIFICATION BY MASS SPECTROMETRY [LARGE SCALE ANALYSIS]</scope>
</reference>
<reference key="7">
    <citation type="journal article" date="2013" name="PLoS ONE">
        <title>Genome-wide comparative in silico analysis of the RNA helicase gene family in Zea mays and Glycine max: a comparison with Arabidopsis and Oryza sativa.</title>
        <authorList>
            <person name="Xu R."/>
            <person name="Zhang S."/>
            <person name="Huang J."/>
            <person name="Zheng C."/>
        </authorList>
    </citation>
    <scope>GENE FAMILY</scope>
</reference>
<comment type="function">
    <text evidence="1">ATP-dependent RNA helicase required for 60S ribosomal subunit synthesis. Involved in efficient pre-rRNA processing, predominantly at site A3, which is necessary for the normal formation of 25S and 5.8S rRNAs (By similarity).</text>
</comment>
<comment type="catalytic activity">
    <reaction>
        <text>ATP + H2O = ADP + phosphate + H(+)</text>
        <dbReference type="Rhea" id="RHEA:13065"/>
        <dbReference type="ChEBI" id="CHEBI:15377"/>
        <dbReference type="ChEBI" id="CHEBI:15378"/>
        <dbReference type="ChEBI" id="CHEBI:30616"/>
        <dbReference type="ChEBI" id="CHEBI:43474"/>
        <dbReference type="ChEBI" id="CHEBI:456216"/>
        <dbReference type="EC" id="3.6.4.13"/>
    </reaction>
</comment>
<comment type="subcellular location">
    <subcellularLocation>
        <location evidence="1">Nucleus</location>
        <location evidence="1">Nucleolus</location>
    </subcellularLocation>
</comment>
<comment type="domain">
    <text>The Q motif is unique to and characteristic of the DEAD box family of RNA helicases and controls ATP binding and hydrolysis.</text>
</comment>
<comment type="similarity">
    <text evidence="6">Belongs to the DEAD box helicase family. DDX5/DBP2 subfamily.</text>
</comment>
<protein>
    <recommendedName>
        <fullName>DEAD-box ATP-dependent RNA helicase 5</fullName>
        <ecNumber>3.6.4.13</ecNumber>
    </recommendedName>
</protein>
<name>RH5_ARATH</name>
<organism>
    <name type="scientific">Arabidopsis thaliana</name>
    <name type="common">Mouse-ear cress</name>
    <dbReference type="NCBI Taxonomy" id="3702"/>
    <lineage>
        <taxon>Eukaryota</taxon>
        <taxon>Viridiplantae</taxon>
        <taxon>Streptophyta</taxon>
        <taxon>Embryophyta</taxon>
        <taxon>Tracheophyta</taxon>
        <taxon>Spermatophyta</taxon>
        <taxon>Magnoliopsida</taxon>
        <taxon>eudicotyledons</taxon>
        <taxon>Gunneridae</taxon>
        <taxon>Pentapetalae</taxon>
        <taxon>rosids</taxon>
        <taxon>malvids</taxon>
        <taxon>Brassicales</taxon>
        <taxon>Brassicaceae</taxon>
        <taxon>Camelineae</taxon>
        <taxon>Arabidopsis</taxon>
    </lineage>
</organism>
<proteinExistence type="evidence at protein level"/>
<sequence length="537" mass="59604">MAGQKQELPVSGEPLAVESPMTNKKKKKSKKNKHTEENHEVEEVPQEVTNGVEEELSNKEKKKKRKREEKESEKNKKKDVPEKKLEAEDLGEGESEQQKVVVTGKGVEEAKYAALKTFAESNLPENVLDCCKTFEKPSPIQSHTWPFLLDGRDLIGIAKTGSGKTLAFGIPAIMHVLKKNKKIGGGSKKVNPTCLVLSPTRELAVQISDVLREAGEPCGLKSICVYGGSSKGPQISAIRSGVDIVIGTPGRLRDLIESNVLRLSDVSFVVLDEADRMLDMGFEEPVRFILSNTNKVRQMVMFSATWPLDVHKLAQEFMDPNPIKVIIGSVDLAANHDVMQIIEVLDERARDQRLIALLEKYHKSQKNRVLVFALYKVEAERLERFLQQRGWKAVSIHGNKAQSERTRSLSLFKEGSCPLLVATDVAARGLDIPDVEVVINYTFPLTTEDYVHRIGRTGRAGKKGVAHTFFTPLNKGLAGELVNVLREAGQVVPADLLKFGTHVKKKESKLYGAHFKEIAADAPKATKITFDNSDDED</sequence>
<accession>Q9C551</accession>
<accession>Q9ZS13</accession>